<comment type="subcellular location">
    <subcellularLocation>
        <location evidence="1">Cell membrane</location>
        <topology evidence="1">Multi-pass membrane protein</topology>
    </subcellularLocation>
</comment>
<comment type="similarity">
    <text evidence="1">Belongs to the UPF0344 family.</text>
</comment>
<reference key="1">
    <citation type="journal article" date="2004" name="Nucleic Acids Res.">
        <title>The genome sequence of Bacillus cereus ATCC 10987 reveals metabolic adaptations and a large plasmid related to Bacillus anthracis pXO1.</title>
        <authorList>
            <person name="Rasko D.A."/>
            <person name="Ravel J."/>
            <person name="Oekstad O.A."/>
            <person name="Helgason E."/>
            <person name="Cer R.Z."/>
            <person name="Jiang L."/>
            <person name="Shores K.A."/>
            <person name="Fouts D.E."/>
            <person name="Tourasse N.J."/>
            <person name="Angiuoli S.V."/>
            <person name="Kolonay J.F."/>
            <person name="Nelson W.C."/>
            <person name="Kolstoe A.-B."/>
            <person name="Fraser C.M."/>
            <person name="Read T.D."/>
        </authorList>
    </citation>
    <scope>NUCLEOTIDE SEQUENCE [LARGE SCALE GENOMIC DNA]</scope>
    <source>
        <strain>ATCC 10987 / NRS 248</strain>
    </source>
</reference>
<feature type="chain" id="PRO_0000105879" description="UPF0344 protein BCE_1257">
    <location>
        <begin position="1"/>
        <end position="121"/>
    </location>
</feature>
<feature type="transmembrane region" description="Helical" evidence="1">
    <location>
        <begin position="6"/>
        <end position="26"/>
    </location>
</feature>
<feature type="transmembrane region" description="Helical" evidence="1">
    <location>
        <begin position="38"/>
        <end position="58"/>
    </location>
</feature>
<feature type="transmembrane region" description="Helical" evidence="1">
    <location>
        <begin position="65"/>
        <end position="85"/>
    </location>
</feature>
<feature type="transmembrane region" description="Helical" evidence="1">
    <location>
        <begin position="92"/>
        <end position="112"/>
    </location>
</feature>
<dbReference type="EMBL" id="AE017194">
    <property type="protein sequence ID" value="AAS40186.1"/>
    <property type="molecule type" value="Genomic_DNA"/>
</dbReference>
<dbReference type="KEGG" id="bca:BCE_1257"/>
<dbReference type="HOGENOM" id="CLU_146641_1_1_9"/>
<dbReference type="Proteomes" id="UP000002527">
    <property type="component" value="Chromosome"/>
</dbReference>
<dbReference type="GO" id="GO:0005886">
    <property type="term" value="C:plasma membrane"/>
    <property type="evidence" value="ECO:0007669"/>
    <property type="project" value="UniProtKB-SubCell"/>
</dbReference>
<dbReference type="HAMAP" id="MF_01536">
    <property type="entry name" value="UPF0344"/>
    <property type="match status" value="1"/>
</dbReference>
<dbReference type="InterPro" id="IPR010899">
    <property type="entry name" value="UPF0344"/>
</dbReference>
<dbReference type="NCBIfam" id="NF010194">
    <property type="entry name" value="PRK13673.1-1"/>
    <property type="match status" value="1"/>
</dbReference>
<dbReference type="Pfam" id="PF07457">
    <property type="entry name" value="DUF1516"/>
    <property type="match status" value="1"/>
</dbReference>
<name>Y1257_BACC1</name>
<organism>
    <name type="scientific">Bacillus cereus (strain ATCC 10987 / NRS 248)</name>
    <dbReference type="NCBI Taxonomy" id="222523"/>
    <lineage>
        <taxon>Bacteria</taxon>
        <taxon>Bacillati</taxon>
        <taxon>Bacillota</taxon>
        <taxon>Bacilli</taxon>
        <taxon>Bacillales</taxon>
        <taxon>Bacillaceae</taxon>
        <taxon>Bacillus</taxon>
        <taxon>Bacillus cereus group</taxon>
    </lineage>
</organism>
<evidence type="ECO:0000255" key="1">
    <source>
        <dbReference type="HAMAP-Rule" id="MF_01536"/>
    </source>
</evidence>
<protein>
    <recommendedName>
        <fullName evidence="1">UPF0344 protein BCE_1257</fullName>
    </recommendedName>
</protein>
<sequence>MVHMHITAWALGLILFFVAYSLYSAGRKGKGVHMGLRLMYIFIIVTGFMLYMSIVKTATGSMHMWYGLKMLAGILVIGGMEMVLVKMSKNKPTGAVWGLFIVALVAVIYLGLKLPIGWKVF</sequence>
<proteinExistence type="inferred from homology"/>
<accession>Q73C11</accession>
<gene>
    <name type="ordered locus">BCE_1257</name>
</gene>
<keyword id="KW-1003">Cell membrane</keyword>
<keyword id="KW-0472">Membrane</keyword>
<keyword id="KW-0812">Transmembrane</keyword>
<keyword id="KW-1133">Transmembrane helix</keyword>